<gene>
    <name evidence="5" type="primary">CYP76AK8</name>
</gene>
<evidence type="ECO:0000250" key="1">
    <source>
        <dbReference type="UniProtKB" id="Q94IP1"/>
    </source>
</evidence>
<evidence type="ECO:0000255" key="2"/>
<evidence type="ECO:0000269" key="3">
    <source>
    </source>
</evidence>
<evidence type="ECO:0000269" key="4">
    <source>
    </source>
</evidence>
<evidence type="ECO:0000303" key="5">
    <source>
    </source>
</evidence>
<evidence type="ECO:0000305" key="6"/>
<evidence type="ECO:0000305" key="7">
    <source>
    </source>
</evidence>
<evidence type="ECO:0000305" key="8">
    <source>
    </source>
</evidence>
<protein>
    <recommendedName>
        <fullName evidence="6">Carnosic acid synthase</fullName>
        <ecNumber evidence="3">1.14.14.61</ecNumber>
    </recommendedName>
    <alternativeName>
        <fullName evidence="5">Cytochrome P450 76AK8</fullName>
        <shortName evidence="5">RoCYP76AK8</shortName>
    </alternativeName>
    <alternativeName>
        <fullName evidence="7">Miltiradien-20-al synthase</fullName>
        <ecNumber evidence="4">1.14.14.-</ecNumber>
    </alternativeName>
    <alternativeName>
        <fullName evidence="7">Pisiferic acid synthase</fullName>
        <ecNumber evidence="4">1.14.14.-</ecNumber>
    </alternativeName>
</protein>
<reference key="1">
    <citation type="journal article" date="2016" name="Nat. Commun.">
        <title>Elucidation of the biosynthesis of carnosic acid and its reconstitution in yeast.</title>
        <authorList>
            <person name="Scheler U."/>
            <person name="Brandt W."/>
            <person name="Porzel A."/>
            <person name="Rothe K."/>
            <person name="Manzano D."/>
            <person name="Bozic D."/>
            <person name="Papaefthimiou D."/>
            <person name="Balcke G.U."/>
            <person name="Henning A."/>
            <person name="Lohse S."/>
            <person name="Marillonnet S."/>
            <person name="Kanellis A.K."/>
            <person name="Ferrer A."/>
            <person name="Tissier A."/>
        </authorList>
    </citation>
    <scope>NUCLEOTIDE SEQUENCE [MRNA]</scope>
    <scope>FUNCTION</scope>
    <scope>CATALYTIC ACTIVITY</scope>
    <scope>TISSUE SPECIFICITY</scope>
</reference>
<reference key="2">
    <citation type="journal article" date="2016" name="Proc. Natl. Acad. Sci. U.S.A.">
        <title>Carnosic acid biosynthesis elucidated by a synthetic biology platform.</title>
        <authorList>
            <person name="Ignea C."/>
            <person name="Athanasakoglou A."/>
            <person name="Ioannou E."/>
            <person name="Georgantea P."/>
            <person name="Trikka F.A."/>
            <person name="Loupassaki S."/>
            <person name="Roussis V."/>
            <person name="Makris A.M."/>
            <person name="Kampranis S.C."/>
        </authorList>
    </citation>
    <scope>FUNCTION</scope>
    <scope>CATALYTIC ACTIVITY</scope>
</reference>
<reference key="3">
    <citation type="journal article" date="2019" name="Nat. Prod. Rep.">
        <title>Non-volatile natural products in plant glandular trichomes: chemistry, biological activities and biosynthesis.</title>
        <authorList>
            <person name="Liu Y."/>
            <person name="Jing S.-X."/>
            <person name="Luo S.-H."/>
            <person name="Li S.-H."/>
        </authorList>
    </citation>
    <scope>PATHWAY</scope>
    <scope>REVIEW</scope>
</reference>
<keyword id="KW-0349">Heme</keyword>
<keyword id="KW-0408">Iron</keyword>
<keyword id="KW-0472">Membrane</keyword>
<keyword id="KW-0479">Metal-binding</keyword>
<keyword id="KW-0503">Monooxygenase</keyword>
<keyword id="KW-0560">Oxidoreductase</keyword>
<keyword id="KW-0812">Transmembrane</keyword>
<keyword id="KW-1133">Transmembrane helix</keyword>
<feature type="chain" id="PRO_5009111366" description="Carnosic acid synthase">
    <location>
        <begin position="1"/>
        <end position="504"/>
    </location>
</feature>
<feature type="transmembrane region" description="Helical" evidence="2">
    <location>
        <begin position="4"/>
        <end position="24"/>
    </location>
</feature>
<feature type="binding site" description="axial binding residue" evidence="1">
    <location>
        <position position="447"/>
    </location>
    <ligand>
        <name>heme</name>
        <dbReference type="ChEBI" id="CHEBI:30413"/>
    </ligand>
    <ligandPart>
        <name>Fe</name>
        <dbReference type="ChEBI" id="CHEBI:18248"/>
    </ligandPart>
</feature>
<accession>A0A1D8QMG4</accession>
<proteinExistence type="evidence at protein level"/>
<name>C76K8_ROSOF</name>
<sequence>MQLFIILSLAFIAAWVVYSRWSEYSRGRQGGSGGLPPGPPRLPIIGNILQLGRDPHKSLAQLAKTYGPLMSLKLGNQFAVVVSSPEMAREILQKQGLIFSKPFTPSAVRVLGHNDISMNMLPASSDRWKKLRRVAREQLFSNPALQATQDIRQERLRQLTDYASRCCAQGRAMNVGEATFTTMTNLMFATLFSVELTQYGATDTGSDKKFKEHVNALTRYMGVPNVADFFPFLAPLDPQGMRRKLTYHLGSLLELVQSLIQQRLQARNDSTYQKKNDFLDTLLDLSEGNEYDLSIKEIKHMFVDLIIAGSDTSAATTEWAMVELLLHPDKMAKLKAELKSVLGEKSIVEESDISRLPYLLATVKEVLRYHPAAPLLAPHAAEEETQVSGYIIPKNTKMFINVWSITRDPSIWKNPESFEPERFLDSEIDFGGQHFELIPFGSGRRICPGMPLASRMLQCMVATLCHNFDWELEKGAESKQLQREDVFGLALQKKIPLRAVPIKV</sequence>
<comment type="function">
    <text evidence="3 4">Monooxygenase involved in the biosynthesis of carnosate, a potent antioxidant labdane-related diterpene natural products (PubMed:26976595). Catalyzes the oxidation of 11-hydroxyferruginol to produce carnosate (PubMed:26976595). Mediates the conversion of miltiradien into miltiradien-20-al (PubMed:27703160). Also involved in the production of pisiferic acid and derivative products from ferruginol (PubMed:27703160).</text>
</comment>
<comment type="catalytic activity">
    <reaction evidence="3">
        <text>11-hydroxyferruginol + 3 reduced [NADPH--hemoprotein reductase] + 3 O2 = carnosate + 3 oxidized [NADPH--hemoprotein reductase] + 4 H2O + 4 H(+)</text>
        <dbReference type="Rhea" id="RHEA:55432"/>
        <dbReference type="Rhea" id="RHEA-COMP:11964"/>
        <dbReference type="Rhea" id="RHEA-COMP:11965"/>
        <dbReference type="ChEBI" id="CHEBI:15377"/>
        <dbReference type="ChEBI" id="CHEBI:15378"/>
        <dbReference type="ChEBI" id="CHEBI:15379"/>
        <dbReference type="ChEBI" id="CHEBI:57618"/>
        <dbReference type="ChEBI" id="CHEBI:58210"/>
        <dbReference type="ChEBI" id="CHEBI:138942"/>
        <dbReference type="ChEBI" id="CHEBI:138943"/>
        <dbReference type="EC" id="1.14.14.61"/>
    </reaction>
    <physiologicalReaction direction="left-to-right" evidence="3">
        <dbReference type="Rhea" id="RHEA:55433"/>
    </physiologicalReaction>
</comment>
<comment type="catalytic activity">
    <reaction evidence="4">
        <text>miltiradiene + 2 reduced [NADPH--hemoprotein reductase] + 2 O2 = miltiradien-20-al + 2 oxidized [NADPH--hemoprotein reductase] + 3 H2O + 2 H(+)</text>
        <dbReference type="Rhea" id="RHEA:66800"/>
        <dbReference type="Rhea" id="RHEA-COMP:11964"/>
        <dbReference type="Rhea" id="RHEA-COMP:11965"/>
        <dbReference type="ChEBI" id="CHEBI:15377"/>
        <dbReference type="ChEBI" id="CHEBI:15378"/>
        <dbReference type="ChEBI" id="CHEBI:15379"/>
        <dbReference type="ChEBI" id="CHEBI:57618"/>
        <dbReference type="ChEBI" id="CHEBI:58210"/>
        <dbReference type="ChEBI" id="CHEBI:65037"/>
        <dbReference type="ChEBI" id="CHEBI:167488"/>
    </reaction>
    <physiologicalReaction direction="left-to-right" evidence="4">
        <dbReference type="Rhea" id="RHEA:66801"/>
    </physiologicalReaction>
</comment>
<comment type="catalytic activity">
    <reaction evidence="4">
        <text>ferruginol + 3 reduced [NADPH--hemoprotein reductase] + 3 O2 = pisiferate + 3 oxidized [NADPH--hemoprotein reductase] + 4 H2O + 4 H(+)</text>
        <dbReference type="Rhea" id="RHEA:66804"/>
        <dbReference type="Rhea" id="RHEA-COMP:11964"/>
        <dbReference type="Rhea" id="RHEA-COMP:11965"/>
        <dbReference type="ChEBI" id="CHEBI:15377"/>
        <dbReference type="ChEBI" id="CHEBI:15378"/>
        <dbReference type="ChEBI" id="CHEBI:15379"/>
        <dbReference type="ChEBI" id="CHEBI:57618"/>
        <dbReference type="ChEBI" id="CHEBI:58210"/>
        <dbReference type="ChEBI" id="CHEBI:78274"/>
        <dbReference type="ChEBI" id="CHEBI:167487"/>
    </reaction>
    <physiologicalReaction direction="left-to-right" evidence="4">
        <dbReference type="Rhea" id="RHEA:66805"/>
    </physiologicalReaction>
</comment>
<comment type="cofactor">
    <cofactor evidence="1">
        <name>heme</name>
        <dbReference type="ChEBI" id="CHEBI:30413"/>
    </cofactor>
</comment>
<comment type="pathway">
    <text evidence="8">Secondary metabolite biosynthesis; terpenoid biosynthesis.</text>
</comment>
<comment type="subcellular location">
    <subcellularLocation>
        <location evidence="2">Membrane</location>
        <topology evidence="2">Single-pass membrane protein</topology>
    </subcellularLocation>
</comment>
<comment type="tissue specificity">
    <text evidence="4">Expressed in glandular trichomes of young leaves.</text>
</comment>
<comment type="similarity">
    <text evidence="6">Belongs to the cytochrome P450 family.</text>
</comment>
<organism>
    <name type="scientific">Rosmarinus officinalis</name>
    <name type="common">Rosemary</name>
    <name type="synonym">Salvia rosmarinus</name>
    <dbReference type="NCBI Taxonomy" id="39367"/>
    <lineage>
        <taxon>Eukaryota</taxon>
        <taxon>Viridiplantae</taxon>
        <taxon>Streptophyta</taxon>
        <taxon>Embryophyta</taxon>
        <taxon>Tracheophyta</taxon>
        <taxon>Spermatophyta</taxon>
        <taxon>Magnoliopsida</taxon>
        <taxon>eudicotyledons</taxon>
        <taxon>Gunneridae</taxon>
        <taxon>Pentapetalae</taxon>
        <taxon>asterids</taxon>
        <taxon>lamiids</taxon>
        <taxon>Lamiales</taxon>
        <taxon>Lamiaceae</taxon>
        <taxon>Nepetoideae</taxon>
        <taxon>Mentheae</taxon>
        <taxon>Salviinae</taxon>
        <taxon>Salvia</taxon>
        <taxon>Salvia subgen. Rosmarinus</taxon>
    </lineage>
</organism>
<dbReference type="EC" id="1.14.14.61" evidence="3"/>
<dbReference type="EC" id="1.14.14.-" evidence="4"/>
<dbReference type="EMBL" id="KX431220">
    <property type="protein sequence ID" value="AOW42546.1"/>
    <property type="molecule type" value="mRNA"/>
</dbReference>
<dbReference type="SMR" id="A0A1D8QMG4"/>
<dbReference type="BioCyc" id="MetaCyc:MONOMER-21173"/>
<dbReference type="UniPathway" id="UPA00213"/>
<dbReference type="GO" id="GO:0016020">
    <property type="term" value="C:membrane"/>
    <property type="evidence" value="ECO:0007669"/>
    <property type="project" value="UniProtKB-SubCell"/>
</dbReference>
<dbReference type="GO" id="GO:0020037">
    <property type="term" value="F:heme binding"/>
    <property type="evidence" value="ECO:0007669"/>
    <property type="project" value="InterPro"/>
</dbReference>
<dbReference type="GO" id="GO:0005506">
    <property type="term" value="F:iron ion binding"/>
    <property type="evidence" value="ECO:0007669"/>
    <property type="project" value="InterPro"/>
</dbReference>
<dbReference type="GO" id="GO:0016712">
    <property type="term" value="F:oxidoreductase activity, acting on paired donors, with incorporation or reduction of molecular oxygen, reduced flavin or flavoprotein as one donor, and incorporation of one atom of oxygen"/>
    <property type="evidence" value="ECO:0000314"/>
    <property type="project" value="UniProtKB"/>
</dbReference>
<dbReference type="GO" id="GO:0016102">
    <property type="term" value="P:diterpenoid biosynthetic process"/>
    <property type="evidence" value="ECO:0000314"/>
    <property type="project" value="UniProtKB"/>
</dbReference>
<dbReference type="CDD" id="cd11073">
    <property type="entry name" value="CYP76-like"/>
    <property type="match status" value="1"/>
</dbReference>
<dbReference type="FunFam" id="1.10.630.10:FF:000007">
    <property type="entry name" value="Cytochrome P450 76C4"/>
    <property type="match status" value="1"/>
</dbReference>
<dbReference type="Gene3D" id="1.10.630.10">
    <property type="entry name" value="Cytochrome P450"/>
    <property type="match status" value="1"/>
</dbReference>
<dbReference type="InterPro" id="IPR001128">
    <property type="entry name" value="Cyt_P450"/>
</dbReference>
<dbReference type="InterPro" id="IPR017972">
    <property type="entry name" value="Cyt_P450_CS"/>
</dbReference>
<dbReference type="InterPro" id="IPR002401">
    <property type="entry name" value="Cyt_P450_E_grp-I"/>
</dbReference>
<dbReference type="InterPro" id="IPR036396">
    <property type="entry name" value="Cyt_P450_sf"/>
</dbReference>
<dbReference type="PANTHER" id="PTHR47950">
    <property type="entry name" value="CYTOCHROME P450, FAMILY 76, SUBFAMILY C, POLYPEPTIDE 5-RELATED"/>
    <property type="match status" value="1"/>
</dbReference>
<dbReference type="PANTHER" id="PTHR47950:SF4">
    <property type="entry name" value="GERANIOL 8-HYDROXYLASE-LIKE"/>
    <property type="match status" value="1"/>
</dbReference>
<dbReference type="Pfam" id="PF00067">
    <property type="entry name" value="p450"/>
    <property type="match status" value="1"/>
</dbReference>
<dbReference type="PRINTS" id="PR00463">
    <property type="entry name" value="EP450I"/>
</dbReference>
<dbReference type="PRINTS" id="PR00385">
    <property type="entry name" value="P450"/>
</dbReference>
<dbReference type="SUPFAM" id="SSF48264">
    <property type="entry name" value="Cytochrome P450"/>
    <property type="match status" value="1"/>
</dbReference>
<dbReference type="PROSITE" id="PS00086">
    <property type="entry name" value="CYTOCHROME_P450"/>
    <property type="match status" value="1"/>
</dbReference>